<keyword id="KW-1003">Cell membrane</keyword>
<keyword id="KW-1015">Disulfide bond</keyword>
<keyword id="KW-0297">G-protein coupled receptor</keyword>
<keyword id="KW-0325">Glycoprotein</keyword>
<keyword id="KW-0472">Membrane</keyword>
<keyword id="KW-0675">Receptor</keyword>
<keyword id="KW-1185">Reference proteome</keyword>
<keyword id="KW-0807">Transducer</keyword>
<keyword id="KW-0812">Transmembrane</keyword>
<keyword id="KW-1133">Transmembrane helix</keyword>
<gene>
    <name evidence="7 8" type="primary">Taar5</name>
</gene>
<dbReference type="EMBL" id="AY702318">
    <property type="protein sequence ID" value="AAV70130.1"/>
    <property type="molecule type" value="Genomic_DNA"/>
</dbReference>
<dbReference type="RefSeq" id="NP_001009650.1">
    <property type="nucleotide sequence ID" value="NM_001009650.1"/>
</dbReference>
<dbReference type="SMR" id="Q5QD23"/>
<dbReference type="FunCoup" id="Q5QD23">
    <property type="interactions" value="24"/>
</dbReference>
<dbReference type="STRING" id="10116.ENSRNOP00000057922"/>
<dbReference type="GlyCosmos" id="Q5QD23">
    <property type="glycosylation" value="1 site, No reported glycans"/>
</dbReference>
<dbReference type="GlyGen" id="Q5QD23">
    <property type="glycosylation" value="1 site"/>
</dbReference>
<dbReference type="PhosphoSitePlus" id="Q5QD23"/>
<dbReference type="PaxDb" id="10116-ENSRNOP00000057922"/>
<dbReference type="Ensembl" id="ENSRNOT00000061209.2">
    <property type="protein sequence ID" value="ENSRNOP00000057922.1"/>
    <property type="gene ID" value="ENSRNOG00000039869.2"/>
</dbReference>
<dbReference type="GeneID" id="294123"/>
<dbReference type="KEGG" id="rno:294123"/>
<dbReference type="AGR" id="RGD:1359185"/>
<dbReference type="CTD" id="9038"/>
<dbReference type="RGD" id="1359185">
    <property type="gene designation" value="Taar5"/>
</dbReference>
<dbReference type="eggNOG" id="KOG3656">
    <property type="taxonomic scope" value="Eukaryota"/>
</dbReference>
<dbReference type="GeneTree" id="ENSGT00940000161258"/>
<dbReference type="HOGENOM" id="CLU_009579_11_0_1"/>
<dbReference type="InParanoid" id="Q5QD23"/>
<dbReference type="OMA" id="PTIDLYQ"/>
<dbReference type="OrthoDB" id="5959645at2759"/>
<dbReference type="PhylomeDB" id="Q5QD23"/>
<dbReference type="TreeFam" id="TF343107"/>
<dbReference type="Reactome" id="R-RNO-375280">
    <property type="pathway name" value="Amine ligand-binding receptors"/>
</dbReference>
<dbReference type="PRO" id="PR:Q5QD23"/>
<dbReference type="Proteomes" id="UP000002494">
    <property type="component" value="Chromosome 1"/>
</dbReference>
<dbReference type="GO" id="GO:0005886">
    <property type="term" value="C:plasma membrane"/>
    <property type="evidence" value="ECO:0000250"/>
    <property type="project" value="UniProtKB"/>
</dbReference>
<dbReference type="GO" id="GO:0001594">
    <property type="term" value="F:trace-amine receptor activity"/>
    <property type="evidence" value="ECO:0000314"/>
    <property type="project" value="UniProtKB"/>
</dbReference>
<dbReference type="GO" id="GO:1990081">
    <property type="term" value="F:trimethylamine receptor activity"/>
    <property type="evidence" value="ECO:0000266"/>
    <property type="project" value="RGD"/>
</dbReference>
<dbReference type="GO" id="GO:0007189">
    <property type="term" value="P:adenylate cyclase-activating G protein-coupled receptor signaling pathway"/>
    <property type="evidence" value="ECO:0000250"/>
    <property type="project" value="UniProtKB"/>
</dbReference>
<dbReference type="GO" id="GO:0007166">
    <property type="term" value="P:cell surface receptor signaling pathway"/>
    <property type="evidence" value="ECO:0007669"/>
    <property type="project" value="InterPro"/>
</dbReference>
<dbReference type="GO" id="GO:0050890">
    <property type="term" value="P:cognition"/>
    <property type="evidence" value="ECO:0000250"/>
    <property type="project" value="UniProtKB"/>
</dbReference>
<dbReference type="GO" id="GO:0007186">
    <property type="term" value="P:G protein-coupled receptor signaling pathway"/>
    <property type="evidence" value="ECO:0000318"/>
    <property type="project" value="GO_Central"/>
</dbReference>
<dbReference type="GO" id="GO:0007606">
    <property type="term" value="P:sensory perception of chemical stimulus"/>
    <property type="evidence" value="ECO:0000266"/>
    <property type="project" value="RGD"/>
</dbReference>
<dbReference type="FunFam" id="1.20.1070.10:FF:000030">
    <property type="entry name" value="trace amine-associated receptor 1"/>
    <property type="match status" value="1"/>
</dbReference>
<dbReference type="Gene3D" id="1.20.1070.10">
    <property type="entry name" value="Rhodopsin 7-helix transmembrane proteins"/>
    <property type="match status" value="1"/>
</dbReference>
<dbReference type="InterPro" id="IPR017981">
    <property type="entry name" value="GPCR_2-like_7TM"/>
</dbReference>
<dbReference type="InterPro" id="IPR000276">
    <property type="entry name" value="GPCR_Rhodpsn"/>
</dbReference>
<dbReference type="InterPro" id="IPR017452">
    <property type="entry name" value="GPCR_Rhodpsn_7TM"/>
</dbReference>
<dbReference type="InterPro" id="IPR050569">
    <property type="entry name" value="TAAR"/>
</dbReference>
<dbReference type="InterPro" id="IPR009132">
    <property type="entry name" value="TAAR_fam"/>
</dbReference>
<dbReference type="PANTHER" id="PTHR24249">
    <property type="entry name" value="HISTAMINE RECEPTOR-RELATED G-PROTEIN COUPLED RECEPTOR"/>
    <property type="match status" value="1"/>
</dbReference>
<dbReference type="PANTHER" id="PTHR24249:SF307">
    <property type="entry name" value="TRACE AMINE-ASSOCIATED RECEPTOR 5"/>
    <property type="match status" value="1"/>
</dbReference>
<dbReference type="Pfam" id="PF00001">
    <property type="entry name" value="7tm_1"/>
    <property type="match status" value="1"/>
</dbReference>
<dbReference type="PRINTS" id="PR00237">
    <property type="entry name" value="GPCRRHODOPSN"/>
</dbReference>
<dbReference type="PRINTS" id="PR01830">
    <property type="entry name" value="TRACEAMINER"/>
</dbReference>
<dbReference type="SMART" id="SM01381">
    <property type="entry name" value="7TM_GPCR_Srsx"/>
    <property type="match status" value="1"/>
</dbReference>
<dbReference type="SUPFAM" id="SSF81321">
    <property type="entry name" value="Family A G protein-coupled receptor-like"/>
    <property type="match status" value="1"/>
</dbReference>
<dbReference type="PROSITE" id="PS00237">
    <property type="entry name" value="G_PROTEIN_RECEP_F1_1"/>
    <property type="match status" value="1"/>
</dbReference>
<dbReference type="PROSITE" id="PS50262">
    <property type="entry name" value="G_PROTEIN_RECEP_F1_2"/>
    <property type="match status" value="1"/>
</dbReference>
<proteinExistence type="inferred from homology"/>
<reference key="1">
    <citation type="journal article" date="2005" name="Genomics">
        <title>Trace amine-associated receptors form structurally and functionally distinct subfamilies of novel G protein-coupled receptors.</title>
        <authorList>
            <person name="Lindemann L."/>
            <person name="Ebeling M."/>
            <person name="Kratochwil N.A."/>
            <person name="Bunzow J.R."/>
            <person name="Grandy D.K."/>
            <person name="Hoener M.C."/>
        </authorList>
    </citation>
    <scope>NUCLEOTIDE SEQUENCE [GENOMIC DNA]</scope>
    <source>
        <strain>WIST/Crl</strain>
    </source>
</reference>
<reference key="2">
    <citation type="journal article" date="2012" name="ACS Chem. Biol.">
        <title>Agonists for 13 trace amine-associated receptors provide insight into the molecular basis of odor selectivity.</title>
        <authorList>
            <person name="Ferrero D.M."/>
            <person name="Wacker D."/>
            <person name="Roque M.A."/>
            <person name="Baldwin M.W."/>
            <person name="Stevens R.C."/>
            <person name="Liberles S.D."/>
        </authorList>
    </citation>
    <scope>FUNCTION</scope>
</reference>
<protein>
    <recommendedName>
        <fullName evidence="7">Trace amine-associated receptor 5</fullName>
        <shortName>TaR-5</shortName>
        <shortName>Trace amine receptor 5</shortName>
    </recommendedName>
</protein>
<feature type="chain" id="PRO_0000070157" description="Trace amine-associated receptor 5">
    <location>
        <begin position="1"/>
        <end position="337"/>
    </location>
</feature>
<feature type="topological domain" description="Extracellular" evidence="4">
    <location>
        <begin position="1"/>
        <end position="38"/>
    </location>
</feature>
<feature type="transmembrane region" description="Helical; Name=1" evidence="4">
    <location>
        <begin position="39"/>
        <end position="59"/>
    </location>
</feature>
<feature type="topological domain" description="Cytoplasmic" evidence="4">
    <location>
        <begin position="60"/>
        <end position="70"/>
    </location>
</feature>
<feature type="transmembrane region" description="Helical; Name=2" evidence="4">
    <location>
        <begin position="71"/>
        <end position="91"/>
    </location>
</feature>
<feature type="topological domain" description="Extracellular" evidence="4">
    <location>
        <begin position="92"/>
        <end position="109"/>
    </location>
</feature>
<feature type="transmembrane region" description="Helical; Name=3" evidence="4">
    <location>
        <begin position="110"/>
        <end position="130"/>
    </location>
</feature>
<feature type="topological domain" description="Cytoplasmic" evidence="4">
    <location>
        <begin position="131"/>
        <end position="154"/>
    </location>
</feature>
<feature type="transmembrane region" description="Helical; Name=4" evidence="4">
    <location>
        <begin position="155"/>
        <end position="175"/>
    </location>
</feature>
<feature type="topological domain" description="Extracellular" evidence="4">
    <location>
        <begin position="176"/>
        <end position="204"/>
    </location>
</feature>
<feature type="transmembrane region" description="Helical; Name=5" evidence="4">
    <location>
        <begin position="205"/>
        <end position="225"/>
    </location>
</feature>
<feature type="topological domain" description="Cytoplasmic" evidence="4">
    <location>
        <begin position="226"/>
        <end position="253"/>
    </location>
</feature>
<feature type="transmembrane region" description="Helical; Name=6" evidence="4">
    <location>
        <begin position="254"/>
        <end position="274"/>
    </location>
</feature>
<feature type="topological domain" description="Extracellular" evidence="4">
    <location>
        <begin position="275"/>
        <end position="284"/>
    </location>
</feature>
<feature type="transmembrane region" description="Helical; Name=7" evidence="4">
    <location>
        <begin position="285"/>
        <end position="307"/>
    </location>
</feature>
<feature type="topological domain" description="Cytoplasmic" evidence="4">
    <location>
        <begin position="308"/>
        <end position="337"/>
    </location>
</feature>
<feature type="region of interest" description="Extracellular Loop 2 (ECL2)" evidence="2">
    <location>
        <begin position="176"/>
        <end position="189"/>
    </location>
</feature>
<feature type="glycosylation site" description="N-linked (GlcNAc...) asparagine" evidence="4">
    <location>
        <position position="21"/>
    </location>
</feature>
<feature type="disulfide bond" evidence="3">
    <location>
        <begin position="24"/>
        <end position="188"/>
    </location>
</feature>
<feature type="disulfide bond" evidence="5">
    <location>
        <begin position="99"/>
        <end position="192"/>
    </location>
</feature>
<organism>
    <name type="scientific">Rattus norvegicus</name>
    <name type="common">Rat</name>
    <dbReference type="NCBI Taxonomy" id="10116"/>
    <lineage>
        <taxon>Eukaryota</taxon>
        <taxon>Metazoa</taxon>
        <taxon>Chordata</taxon>
        <taxon>Craniata</taxon>
        <taxon>Vertebrata</taxon>
        <taxon>Euteleostomi</taxon>
        <taxon>Mammalia</taxon>
        <taxon>Eutheria</taxon>
        <taxon>Euarchontoglires</taxon>
        <taxon>Glires</taxon>
        <taxon>Rodentia</taxon>
        <taxon>Myomorpha</taxon>
        <taxon>Muroidea</taxon>
        <taxon>Muridae</taxon>
        <taxon>Murinae</taxon>
        <taxon>Rattus</taxon>
    </lineage>
</organism>
<comment type="function">
    <text evidence="3 6">Olfactory receptor specific for trimethylamine, a trace amine enriched in the urine of male rats, playing a role in social behavior (PubMed:22545963). Also activated by N-methylpiperidine (PubMed:22545963). Trimethylamine is present at high concentration in the urine of male after puberty and acts as an attractant (By similarity). Trimethylamine-binding causes a conformation change that triggers signaling via G(s)-class of G alpha proteins (GNAL or GNAS) (By similarity). Also required to provide olfactory input into limbic brain areas to regulate emotional behaviors likely via modulation of the serotonin system (By similarity).</text>
</comment>
<comment type="subcellular location">
    <subcellularLocation>
        <location evidence="1">Cell membrane</location>
        <topology evidence="1">Multi-pass membrane protein</topology>
    </subcellularLocation>
</comment>
<comment type="domain">
    <text evidence="2">In addition to the well known disulfide bond common to G-protein coupled receptor 1 family, trace amine-associated receptors (TAARs) contain an unique disulfide bond (Cys-24-Cys-188) connecting the N-terminus to the extracellular Loop 2 (ECL2), which is required for agonist-induced receptor activation.</text>
</comment>
<comment type="similarity">
    <text evidence="5">Belongs to the G-protein coupled receptor 1 family.</text>
</comment>
<sequence length="337" mass="38218">MRAVLLPGSGEQPAAFCYQVNGSCPRTVHPLAIRVLIYLACAVGMLITVLGNLFVVFAVSYFKVLHTPTNFLLLSLALADMLLGLLVLPLSTVRSVESCWFFGDFLCRLHTYLDTLFCLTSIFHLCFISIDRHCAICDPLLYPSKFTVRIALRYIAAGWGIPAAYTAFFLYTDVVERALSQWLEEMPCVGSCQLLFNKFWGWLNFPAFFIPCLIMISLYLKIFVVATRQAQQIRTLSQSLSGAVKRERKAAKTLGIAVGIYLVCWLPFTVDTLVDSLLNFVTPPLVFDIFIWFAYFNSACNPIIYVFSYRWFRKALKLLLSREILSPRTQTADLFHD</sequence>
<accession>Q5QD23</accession>
<name>TAAR5_RAT</name>
<evidence type="ECO:0000250" key="1">
    <source>
        <dbReference type="UniProtKB" id="O14804"/>
    </source>
</evidence>
<evidence type="ECO:0000250" key="2">
    <source>
        <dbReference type="UniProtKB" id="Q5QD04"/>
    </source>
</evidence>
<evidence type="ECO:0000250" key="3">
    <source>
        <dbReference type="UniProtKB" id="Q5QD14"/>
    </source>
</evidence>
<evidence type="ECO:0000255" key="4"/>
<evidence type="ECO:0000255" key="5">
    <source>
        <dbReference type="PROSITE-ProRule" id="PRU00521"/>
    </source>
</evidence>
<evidence type="ECO:0000269" key="6">
    <source>
    </source>
</evidence>
<evidence type="ECO:0000303" key="7">
    <source>
    </source>
</evidence>
<evidence type="ECO:0000312" key="8">
    <source>
        <dbReference type="RGD" id="1359185"/>
    </source>
</evidence>